<accession>Q8DBX0</accession>
<sequence length="340" mass="36754">MKKTLIALSVSAAAVATGVNAAELYNQDGTSLDMGGRAEARLSMKDGKVADNSRIRLNFLGKVEIQDGLYGVGFYEGEFTTADNADGSDLDNRYTYAGLGGKFGEVTYGKNDGALGVITDFTDIMAYHGNSAADKIAVADRVDNMMSYKGQFDALSVKASYRFADRADSSKNNVDNTYIDNGKDGYSLSAIYAIGQTGLTLGGGYADQDKSNEYMLAASYTMGDLYFAGVFTDGEKDYGTNGDYSHRGFSSVEDYTGYELAAKYTMGQTVFTTTYNNAETDGYTSTDNFAVDATYYFKPNFRGYVSYNFNLLDAGDKIGTSTISKADAEDELALGLRYDF</sequence>
<name>OMPU_VIBVU</name>
<reference key="1">
    <citation type="submission" date="2002-12" db="EMBL/GenBank/DDBJ databases">
        <title>Complete genome sequence of Vibrio vulnificus CMCP6.</title>
        <authorList>
            <person name="Rhee J.H."/>
            <person name="Kim S.Y."/>
            <person name="Chung S.S."/>
            <person name="Kim J.J."/>
            <person name="Moon Y.H."/>
            <person name="Jeong H."/>
            <person name="Choy H.E."/>
        </authorList>
    </citation>
    <scope>NUCLEOTIDE SEQUENCE [LARGE SCALE GENOMIC DNA]</scope>
    <source>
        <strain>CMCP6</strain>
    </source>
</reference>
<comment type="function">
    <text evidence="1">Forms pores that allow passive diffusion of small molecules across the outer membrane.</text>
</comment>
<comment type="subunit">
    <text evidence="1">Homotrimer.</text>
</comment>
<comment type="subcellular location">
    <subcellularLocation>
        <location evidence="1">Cell outer membrane</location>
        <topology evidence="1">Multi-pass membrane protein</topology>
    </subcellularLocation>
</comment>
<comment type="similarity">
    <text evidence="3">Belongs to the Gram-negative porin family.</text>
</comment>
<evidence type="ECO:0000250" key="1"/>
<evidence type="ECO:0000255" key="2"/>
<evidence type="ECO:0000305" key="3"/>
<gene>
    <name type="primary">ompU</name>
    <name type="ordered locus">VV1_1686</name>
</gene>
<organism>
    <name type="scientific">Vibrio vulnificus (strain CMCP6)</name>
    <dbReference type="NCBI Taxonomy" id="216895"/>
    <lineage>
        <taxon>Bacteria</taxon>
        <taxon>Pseudomonadati</taxon>
        <taxon>Pseudomonadota</taxon>
        <taxon>Gammaproteobacteria</taxon>
        <taxon>Vibrionales</taxon>
        <taxon>Vibrionaceae</taxon>
        <taxon>Vibrio</taxon>
    </lineage>
</organism>
<proteinExistence type="inferred from homology"/>
<dbReference type="EMBL" id="AE016795">
    <property type="protein sequence ID" value="AAO10102.1"/>
    <property type="molecule type" value="Genomic_DNA"/>
</dbReference>
<dbReference type="RefSeq" id="WP_011079605.1">
    <property type="nucleotide sequence ID" value="NC_004459.3"/>
</dbReference>
<dbReference type="SMR" id="Q8DBX0"/>
<dbReference type="KEGG" id="vvu:VV1_1686"/>
<dbReference type="HOGENOM" id="CLU_058202_1_2_6"/>
<dbReference type="Proteomes" id="UP000002275">
    <property type="component" value="Chromosome 1"/>
</dbReference>
<dbReference type="GO" id="GO:0009279">
    <property type="term" value="C:cell outer membrane"/>
    <property type="evidence" value="ECO:0007669"/>
    <property type="project" value="UniProtKB-SubCell"/>
</dbReference>
<dbReference type="GO" id="GO:0046930">
    <property type="term" value="C:pore complex"/>
    <property type="evidence" value="ECO:0007669"/>
    <property type="project" value="UniProtKB-KW"/>
</dbReference>
<dbReference type="GO" id="GO:0015288">
    <property type="term" value="F:porin activity"/>
    <property type="evidence" value="ECO:0007669"/>
    <property type="project" value="UniProtKB-KW"/>
</dbReference>
<dbReference type="GO" id="GO:0006811">
    <property type="term" value="P:monoatomic ion transport"/>
    <property type="evidence" value="ECO:0007669"/>
    <property type="project" value="UniProtKB-KW"/>
</dbReference>
<dbReference type="CDD" id="cd00342">
    <property type="entry name" value="gram_neg_porins"/>
    <property type="match status" value="1"/>
</dbReference>
<dbReference type="Gene3D" id="2.40.160.10">
    <property type="entry name" value="Porin"/>
    <property type="match status" value="1"/>
</dbReference>
<dbReference type="InterPro" id="IPR050298">
    <property type="entry name" value="Gram-neg_bact_OMP"/>
</dbReference>
<dbReference type="InterPro" id="IPR033900">
    <property type="entry name" value="Gram_neg_porin_domain"/>
</dbReference>
<dbReference type="InterPro" id="IPR023614">
    <property type="entry name" value="Porin_dom_sf"/>
</dbReference>
<dbReference type="PANTHER" id="PTHR34501:SF2">
    <property type="entry name" value="OUTER MEMBRANE PORIN F-RELATED"/>
    <property type="match status" value="1"/>
</dbReference>
<dbReference type="PANTHER" id="PTHR34501">
    <property type="entry name" value="PROTEIN YDDL-RELATED"/>
    <property type="match status" value="1"/>
</dbReference>
<dbReference type="Pfam" id="PF13609">
    <property type="entry name" value="Porin_4"/>
    <property type="match status" value="1"/>
</dbReference>
<dbReference type="SUPFAM" id="SSF56935">
    <property type="entry name" value="Porins"/>
    <property type="match status" value="1"/>
</dbReference>
<feature type="signal peptide" evidence="2">
    <location>
        <begin position="1"/>
        <end position="21"/>
    </location>
</feature>
<feature type="chain" id="PRO_0000025290" description="Outer membrane protein U">
    <location>
        <begin position="22"/>
        <end position="340"/>
    </location>
</feature>
<keyword id="KW-0998">Cell outer membrane</keyword>
<keyword id="KW-0406">Ion transport</keyword>
<keyword id="KW-0472">Membrane</keyword>
<keyword id="KW-0626">Porin</keyword>
<keyword id="KW-0732">Signal</keyword>
<keyword id="KW-0812">Transmembrane</keyword>
<keyword id="KW-1134">Transmembrane beta strand</keyword>
<keyword id="KW-0813">Transport</keyword>
<protein>
    <recommendedName>
        <fullName>Outer membrane protein U</fullName>
    </recommendedName>
    <alternativeName>
        <fullName>Porin OmpU</fullName>
    </alternativeName>
</protein>